<proteinExistence type="inferred from homology"/>
<dbReference type="EMBL" id="LT708304">
    <property type="protein sequence ID" value="SIU01219.1"/>
    <property type="molecule type" value="Genomic_DNA"/>
</dbReference>
<dbReference type="RefSeq" id="NP_856247.1">
    <property type="nucleotide sequence ID" value="NC_002945.3"/>
</dbReference>
<dbReference type="RefSeq" id="WP_003899381.1">
    <property type="nucleotide sequence ID" value="NC_002945.4"/>
</dbReference>
<dbReference type="SMR" id="P65016"/>
<dbReference type="KEGG" id="mbo:BQ2027_MB2601C"/>
<dbReference type="PATRIC" id="fig|233413.5.peg.2860"/>
<dbReference type="Proteomes" id="UP000001419">
    <property type="component" value="Chromosome"/>
</dbReference>
<dbReference type="GO" id="GO:0005886">
    <property type="term" value="C:plasma membrane"/>
    <property type="evidence" value="ECO:0007669"/>
    <property type="project" value="UniProtKB-SubCell"/>
</dbReference>
<dbReference type="InterPro" id="IPR049453">
    <property type="entry name" value="Memb_transporter_dom"/>
</dbReference>
<dbReference type="Pfam" id="PF13515">
    <property type="entry name" value="FUSC_2"/>
    <property type="match status" value="1"/>
</dbReference>
<evidence type="ECO:0000250" key="1">
    <source>
        <dbReference type="UniProtKB" id="P9WL89"/>
    </source>
</evidence>
<evidence type="ECO:0000255" key="2"/>
<evidence type="ECO:0000305" key="3"/>
<organism>
    <name type="scientific">Mycobacterium bovis (strain ATCC BAA-935 / AF2122/97)</name>
    <dbReference type="NCBI Taxonomy" id="233413"/>
    <lineage>
        <taxon>Bacteria</taxon>
        <taxon>Bacillati</taxon>
        <taxon>Actinomycetota</taxon>
        <taxon>Actinomycetes</taxon>
        <taxon>Mycobacteriales</taxon>
        <taxon>Mycobacteriaceae</taxon>
        <taxon>Mycobacterium</taxon>
        <taxon>Mycobacterium tuberculosis complex</taxon>
    </lineage>
</organism>
<feature type="chain" id="PRO_0000104053" description="Putative arylamide transporter">
    <location>
        <begin position="1"/>
        <end position="355"/>
    </location>
</feature>
<feature type="transmembrane region" description="Helical" evidence="2">
    <location>
        <begin position="22"/>
        <end position="42"/>
    </location>
</feature>
<feature type="transmembrane region" description="Helical" evidence="2">
    <location>
        <begin position="44"/>
        <end position="64"/>
    </location>
</feature>
<feature type="transmembrane region" description="Helical" evidence="2">
    <location>
        <begin position="71"/>
        <end position="91"/>
    </location>
</feature>
<feature type="transmembrane region" description="Helical" evidence="2">
    <location>
        <begin position="92"/>
        <end position="112"/>
    </location>
</feature>
<feature type="transmembrane region" description="Helical" evidence="2">
    <location>
        <begin position="119"/>
        <end position="139"/>
    </location>
</feature>
<feature type="transmembrane region" description="Helical" evidence="2">
    <location>
        <begin position="150"/>
        <end position="170"/>
    </location>
</feature>
<name>ARYLT_MYCBO</name>
<gene>
    <name type="ordered locus">BQ2027_MB2601C</name>
</gene>
<keyword id="KW-1003">Cell membrane</keyword>
<keyword id="KW-0472">Membrane</keyword>
<keyword id="KW-1185">Reference proteome</keyword>
<keyword id="KW-0812">Transmembrane</keyword>
<keyword id="KW-1133">Transmembrane helix</keyword>
<keyword id="KW-0813">Transport</keyword>
<protein>
    <recommendedName>
        <fullName evidence="1">Putative arylamide transporter</fullName>
    </recommendedName>
</protein>
<comment type="function">
    <text evidence="1">May be involved in the import of arylamide compounds.</text>
</comment>
<comment type="subcellular location">
    <subcellularLocation>
        <location evidence="3">Cell membrane</location>
        <topology evidence="2">Multi-pass membrane protein</topology>
    </subcellularLocation>
</comment>
<reference key="1">
    <citation type="journal article" date="2003" name="Proc. Natl. Acad. Sci. U.S.A.">
        <title>The complete genome sequence of Mycobacterium bovis.</title>
        <authorList>
            <person name="Garnier T."/>
            <person name="Eiglmeier K."/>
            <person name="Camus J.-C."/>
            <person name="Medina N."/>
            <person name="Mansoor H."/>
            <person name="Pryor M."/>
            <person name="Duthoy S."/>
            <person name="Grondin S."/>
            <person name="Lacroix C."/>
            <person name="Monsempe C."/>
            <person name="Simon S."/>
            <person name="Harris B."/>
            <person name="Atkin R."/>
            <person name="Doggett J."/>
            <person name="Mayes R."/>
            <person name="Keating L."/>
            <person name="Wheeler P.R."/>
            <person name="Parkhill J."/>
            <person name="Barrell B.G."/>
            <person name="Cole S.T."/>
            <person name="Gordon S.V."/>
            <person name="Hewinson R.G."/>
        </authorList>
    </citation>
    <scope>NUCLEOTIDE SEQUENCE [LARGE SCALE GENOMIC DNA]</scope>
    <source>
        <strain>ATCC BAA-935 / AF2122/97</strain>
    </source>
</reference>
<reference key="2">
    <citation type="journal article" date="2017" name="Genome Announc.">
        <title>Updated reference genome sequence and annotation of Mycobacterium bovis AF2122/97.</title>
        <authorList>
            <person name="Malone K.M."/>
            <person name="Farrell D."/>
            <person name="Stuber T.P."/>
            <person name="Schubert O.T."/>
            <person name="Aebersold R."/>
            <person name="Robbe-Austerman S."/>
            <person name="Gordon S.V."/>
        </authorList>
    </citation>
    <scope>NUCLEOTIDE SEQUENCE [LARGE SCALE GENOMIC DNA]</scope>
    <scope>GENOME REANNOTATION</scope>
    <source>
        <strain>ATCC BAA-935 / AF2122/97</strain>
    </source>
</reference>
<accession>P65016</accession>
<accession>A0A1R3Y1K8</accession>
<accession>Q50650</accession>
<accession>X2BL82</accession>
<sequence length="355" mass="36790">MSASLLVRTACGGRAVAQRLRTVLWPITQTSVVAGLAWYLTHDVFNHPQAFFAPISAVVCMSATNVLRARRAQQMIVGVALGIVLGAGVHALLGSGPIAMGVVVFIALSVAVLCARGLVAQGLMFINQAAVSAVLVLVFASNGSVVFERLFDALVGGGLAIVFSILLFPPDPVVMLCSARADVLAAVRDILAELVNTVSDPTSAPPDWPMAAADRLHQQLNGLIEVRANAAMVARRAPRRWGVRSTVRDLDQQAVYLALLVSSVLHLARTIAGPGGDKLPTPVHAVLTDLAAGTGLADADPTAANEHAAAARATASTLQSAACGSNEVVRADIVQACVTDLQRVIERPGPSGMSA</sequence>